<organism>
    <name type="scientific">Mycoplasma pneumoniae (strain ATCC 29342 / M129 / Subtype 1)</name>
    <name type="common">Mycoplasmoides pneumoniae</name>
    <dbReference type="NCBI Taxonomy" id="272634"/>
    <lineage>
        <taxon>Bacteria</taxon>
        <taxon>Bacillati</taxon>
        <taxon>Mycoplasmatota</taxon>
        <taxon>Mycoplasmoidales</taxon>
        <taxon>Mycoplasmoidaceae</taxon>
        <taxon>Mycoplasmoides</taxon>
    </lineage>
</organism>
<gene>
    <name type="ordered locus">MPN_673</name>
    <name type="ORF">K05_orf169</name>
    <name type="ORF">MP169</name>
</gene>
<keyword id="KW-1185">Reference proteome</keyword>
<accession>P75118</accession>
<sequence length="169" mass="19467">MQFRVGLGKKKYRIKPRAEQKNKFWIGGVEIEDSKYIYDHDASDDASDVIQLAVADALFGATALGDGQIVFNKEKTQIPLKGNPRKEAPRILARTYNFIRKNWYINNIDITLEIPSQQKMDDYKHAIFDFICTALRITELTINLKVREPLNPNEISCLAVVLVERQRLK</sequence>
<dbReference type="EMBL" id="U00089">
    <property type="protein sequence ID" value="AAB95817.1"/>
    <property type="molecule type" value="Genomic_DNA"/>
</dbReference>
<dbReference type="PIR" id="S73495">
    <property type="entry name" value="S73495"/>
</dbReference>
<dbReference type="RefSeq" id="NP_110362.1">
    <property type="nucleotide sequence ID" value="NC_000912.1"/>
</dbReference>
<dbReference type="RefSeq" id="WP_010875030.1">
    <property type="nucleotide sequence ID" value="NZ_OU342337.1"/>
</dbReference>
<dbReference type="SMR" id="P75118"/>
<dbReference type="STRING" id="272634.MPN_673"/>
<dbReference type="EnsemblBacteria" id="AAB95817">
    <property type="protein sequence ID" value="AAB95817"/>
    <property type="gene ID" value="MPN_673"/>
</dbReference>
<dbReference type="KEGG" id="mpn:MPN_673"/>
<dbReference type="PATRIC" id="fig|272634.6.peg.740"/>
<dbReference type="HOGENOM" id="CLU_1576784_0_0_14"/>
<dbReference type="OrthoDB" id="9804336at2"/>
<dbReference type="BioCyc" id="MPNE272634:G1GJ3-1077-MONOMER"/>
<dbReference type="Proteomes" id="UP000000808">
    <property type="component" value="Chromosome"/>
</dbReference>
<dbReference type="GO" id="GO:0008685">
    <property type="term" value="F:2-C-methyl-D-erythritol 2,4-cyclodiphosphate synthase activity"/>
    <property type="evidence" value="ECO:0007669"/>
    <property type="project" value="InterPro"/>
</dbReference>
<dbReference type="GO" id="GO:0016114">
    <property type="term" value="P:terpenoid biosynthetic process"/>
    <property type="evidence" value="ECO:0007669"/>
    <property type="project" value="InterPro"/>
</dbReference>
<dbReference type="Gene3D" id="3.30.1330.50">
    <property type="entry name" value="2-C-methyl-D-erythritol 2,4-cyclodiphosphate synthase"/>
    <property type="match status" value="1"/>
</dbReference>
<dbReference type="InterPro" id="IPR003526">
    <property type="entry name" value="MECDP_synthase"/>
</dbReference>
<dbReference type="InterPro" id="IPR036571">
    <property type="entry name" value="MECDP_synthase_sf"/>
</dbReference>
<dbReference type="PANTHER" id="PTHR43181">
    <property type="entry name" value="2-C-METHYL-D-ERYTHRITOL 2,4-CYCLODIPHOSPHATE SYNTHASE, CHLOROPLASTIC"/>
    <property type="match status" value="1"/>
</dbReference>
<dbReference type="PANTHER" id="PTHR43181:SF1">
    <property type="entry name" value="2-C-METHYL-D-ERYTHRITOL 2,4-CYCLODIPHOSPHATE SYNTHASE, CHLOROPLASTIC"/>
    <property type="match status" value="1"/>
</dbReference>
<dbReference type="Pfam" id="PF02542">
    <property type="entry name" value="YgbB"/>
    <property type="match status" value="1"/>
</dbReference>
<dbReference type="SUPFAM" id="SSF69765">
    <property type="entry name" value="IpsF-like"/>
    <property type="match status" value="1"/>
</dbReference>
<reference key="1">
    <citation type="journal article" date="1996" name="Nucleic Acids Res.">
        <title>Complete sequence analysis of the genome of the bacterium Mycoplasma pneumoniae.</title>
        <authorList>
            <person name="Himmelreich R."/>
            <person name="Hilbert H."/>
            <person name="Plagens H."/>
            <person name="Pirkl E."/>
            <person name="Li B.-C."/>
            <person name="Herrmann R."/>
        </authorList>
    </citation>
    <scope>NUCLEOTIDE SEQUENCE [LARGE SCALE GENOMIC DNA]</scope>
    <source>
        <strain>ATCC 29342 / M129 / Subtype 1</strain>
    </source>
</reference>
<proteinExistence type="predicted"/>
<protein>
    <recommendedName>
        <fullName>Uncharacterized protein MG459 homolog</fullName>
    </recommendedName>
</protein>
<name>Y673_MYCPN</name>
<feature type="chain" id="PRO_0000210628" description="Uncharacterized protein MG459 homolog">
    <location>
        <begin position="1"/>
        <end position="169"/>
    </location>
</feature>